<reference key="1">
    <citation type="journal article" date="2004" name="Nucleic Acids Res.">
        <title>The genome sequence of Bacillus cereus ATCC 10987 reveals metabolic adaptations and a large plasmid related to Bacillus anthracis pXO1.</title>
        <authorList>
            <person name="Rasko D.A."/>
            <person name="Ravel J."/>
            <person name="Oekstad O.A."/>
            <person name="Helgason E."/>
            <person name="Cer R.Z."/>
            <person name="Jiang L."/>
            <person name="Shores K.A."/>
            <person name="Fouts D.E."/>
            <person name="Tourasse N.J."/>
            <person name="Angiuoli S.V."/>
            <person name="Kolonay J.F."/>
            <person name="Nelson W.C."/>
            <person name="Kolstoe A.-B."/>
            <person name="Fraser C.M."/>
            <person name="Read T.D."/>
        </authorList>
    </citation>
    <scope>NUCLEOTIDE SEQUENCE [LARGE SCALE GENOMIC DNA]</scope>
    <source>
        <strain>ATCC 10987 / NRS 248</strain>
    </source>
</reference>
<protein>
    <recommendedName>
        <fullName>Quinol oxidase subunit 2</fullName>
        <ecNumber>1.10.3.-</ecNumber>
    </recommendedName>
    <alternativeName>
        <fullName>Cytochrome aa(3) subunit 2</fullName>
    </alternativeName>
    <alternativeName>
        <fullName>Quinol oxidase polypeptide II</fullName>
    </alternativeName>
</protein>
<proteinExistence type="inferred from homology"/>
<keyword id="KW-1003">Cell membrane</keyword>
<keyword id="KW-0249">Electron transport</keyword>
<keyword id="KW-0472">Membrane</keyword>
<keyword id="KW-0560">Oxidoreductase</keyword>
<keyword id="KW-0679">Respiratory chain</keyword>
<keyword id="KW-0732">Signal</keyword>
<keyword id="KW-0812">Transmembrane</keyword>
<keyword id="KW-1133">Transmembrane helix</keyword>
<keyword id="KW-0813">Transport</keyword>
<gene>
    <name evidence="4" type="primary">qoxA</name>
    <name type="ordered locus">BCE_0772</name>
</gene>
<feature type="signal peptide" evidence="1">
    <location>
        <begin position="1"/>
        <end position="28"/>
    </location>
</feature>
<feature type="chain" id="PRO_0000006067" description="Quinol oxidase subunit 2">
    <location>
        <begin position="29"/>
        <end position="291"/>
    </location>
</feature>
<feature type="transmembrane region" description="Helical" evidence="2">
    <location>
        <begin position="49"/>
        <end position="69"/>
    </location>
</feature>
<feature type="transmembrane region" description="Helical" evidence="2">
    <location>
        <begin position="91"/>
        <end position="111"/>
    </location>
</feature>
<sequence length="291" mass="33334">MQLKKAFWKLASLLPXSLLLFLGGCDKKLAVLNPQGPVAKAQYDLIVWSFLLMSLIIAIVFILFTVILIRYREKPENMDYEPPEQHGNTLLEIIWTLVPVIIVIALSIPTVKATYASEEVPKESKHIKPVEIYVTSANWKWLFSYPEEKIETVNYLNIPAGVPIQFKLTSVGPMNAFWVPELGGMKYTMDGMIMDLYLQADKPGSYLGRSANFSGEGFTHMEFEVEAKTKEKYDKWVKEVQQTAPKLTEDKYNEIVKPGVVGRMTFSSHHLSYVDPKSLEYCDYNYYKNKK</sequence>
<organism>
    <name type="scientific">Bacillus cereus (strain ATCC 10987 / NRS 248)</name>
    <dbReference type="NCBI Taxonomy" id="222523"/>
    <lineage>
        <taxon>Bacteria</taxon>
        <taxon>Bacillati</taxon>
        <taxon>Bacillota</taxon>
        <taxon>Bacilli</taxon>
        <taxon>Bacillales</taxon>
        <taxon>Bacillaceae</taxon>
        <taxon>Bacillus</taxon>
        <taxon>Bacillus cereus group</taxon>
    </lineage>
</organism>
<evidence type="ECO:0000250" key="1">
    <source>
        <dbReference type="UniProtKB" id="Q81HT3"/>
    </source>
</evidence>
<evidence type="ECO:0000255" key="2"/>
<evidence type="ECO:0000305" key="3"/>
<evidence type="ECO:0000312" key="4">
    <source>
        <dbReference type="EMBL" id="AAS39705.1"/>
    </source>
</evidence>
<comment type="function">
    <text evidence="1">Catalyzes quinol oxidation with the concomitant reduction of oxygen to water. Subunit II transfers the electrons from a quinol to the binuclear center of the catalytic subunit I (By similarity).</text>
</comment>
<comment type="catalytic activity">
    <reaction evidence="3">
        <text>2 a quinol + O2 = 2 a quinone + 2 H2O</text>
        <dbReference type="Rhea" id="RHEA:55376"/>
        <dbReference type="ChEBI" id="CHEBI:15377"/>
        <dbReference type="ChEBI" id="CHEBI:15379"/>
        <dbReference type="ChEBI" id="CHEBI:24646"/>
        <dbReference type="ChEBI" id="CHEBI:132124"/>
    </reaction>
</comment>
<comment type="subcellular location">
    <subcellularLocation>
        <location>Cell membrane</location>
        <topology>Multi-pass membrane protein</topology>
    </subcellularLocation>
</comment>
<comment type="similarity">
    <text evidence="2">Belongs to the cytochrome c oxidase subunit 2 family.</text>
</comment>
<accession>Q73DE0</accession>
<dbReference type="EC" id="1.10.3.-"/>
<dbReference type="EMBL" id="AE017194">
    <property type="protein sequence ID" value="AAS39705.1"/>
    <property type="molecule type" value="Genomic_DNA"/>
</dbReference>
<dbReference type="KEGG" id="bca:BCE_0772"/>
<dbReference type="HOGENOM" id="CLU_036876_6_0_9"/>
<dbReference type="Proteomes" id="UP000002527">
    <property type="component" value="Chromosome"/>
</dbReference>
<dbReference type="GO" id="GO:0005886">
    <property type="term" value="C:plasma membrane"/>
    <property type="evidence" value="ECO:0007669"/>
    <property type="project" value="UniProtKB-SubCell"/>
</dbReference>
<dbReference type="GO" id="GO:0005507">
    <property type="term" value="F:copper ion binding"/>
    <property type="evidence" value="ECO:0007669"/>
    <property type="project" value="InterPro"/>
</dbReference>
<dbReference type="GO" id="GO:0009486">
    <property type="term" value="F:cytochrome bo3 ubiquinol oxidase activity"/>
    <property type="evidence" value="ECO:0007669"/>
    <property type="project" value="InterPro"/>
</dbReference>
<dbReference type="GO" id="GO:0004129">
    <property type="term" value="F:cytochrome-c oxidase activity"/>
    <property type="evidence" value="ECO:0007669"/>
    <property type="project" value="InterPro"/>
</dbReference>
<dbReference type="GO" id="GO:0016682">
    <property type="term" value="F:oxidoreductase activity, acting on diphenols and related substances as donors, oxygen as acceptor"/>
    <property type="evidence" value="ECO:0007669"/>
    <property type="project" value="InterPro"/>
</dbReference>
<dbReference type="GO" id="GO:0042773">
    <property type="term" value="P:ATP synthesis coupled electron transport"/>
    <property type="evidence" value="ECO:0007669"/>
    <property type="project" value="TreeGrafter"/>
</dbReference>
<dbReference type="CDD" id="cd04212">
    <property type="entry name" value="CuRO_UO_II"/>
    <property type="match status" value="1"/>
</dbReference>
<dbReference type="FunFam" id="1.10.287.90:FF:000005">
    <property type="entry name" value="Quinol oxidase subunit 2"/>
    <property type="match status" value="1"/>
</dbReference>
<dbReference type="FunFam" id="2.60.40.420:FF:000014">
    <property type="entry name" value="Quinol oxidase subunit 2"/>
    <property type="match status" value="1"/>
</dbReference>
<dbReference type="Gene3D" id="1.10.287.90">
    <property type="match status" value="1"/>
</dbReference>
<dbReference type="Gene3D" id="2.60.40.420">
    <property type="entry name" value="Cupredoxins - blue copper proteins"/>
    <property type="match status" value="1"/>
</dbReference>
<dbReference type="InterPro" id="IPR045187">
    <property type="entry name" value="CcO_II"/>
</dbReference>
<dbReference type="InterPro" id="IPR002429">
    <property type="entry name" value="CcO_II-like_C"/>
</dbReference>
<dbReference type="InterPro" id="IPR008972">
    <property type="entry name" value="Cupredoxin"/>
</dbReference>
<dbReference type="InterPro" id="IPR034227">
    <property type="entry name" value="CuRO_UO_II"/>
</dbReference>
<dbReference type="InterPro" id="IPR011759">
    <property type="entry name" value="Cyt_c_oxidase_su2_TM_dom"/>
</dbReference>
<dbReference type="InterPro" id="IPR036257">
    <property type="entry name" value="Cyt_c_oxidase_su2_TM_sf"/>
</dbReference>
<dbReference type="InterPro" id="IPR006333">
    <property type="entry name" value="Cyt_o_ubiquinol_oxidase_su2"/>
</dbReference>
<dbReference type="InterPro" id="IPR006332">
    <property type="entry name" value="QoxA"/>
</dbReference>
<dbReference type="NCBIfam" id="TIGR01432">
    <property type="entry name" value="QOXA"/>
    <property type="match status" value="1"/>
</dbReference>
<dbReference type="PANTHER" id="PTHR22888:SF18">
    <property type="entry name" value="CYTOCHROME BO(3) UBIQUINOL OXIDASE SUBUNIT 2"/>
    <property type="match status" value="1"/>
</dbReference>
<dbReference type="PANTHER" id="PTHR22888">
    <property type="entry name" value="CYTOCHROME C OXIDASE, SUBUNIT II"/>
    <property type="match status" value="1"/>
</dbReference>
<dbReference type="Pfam" id="PF02790">
    <property type="entry name" value="COX2_TM"/>
    <property type="match status" value="1"/>
</dbReference>
<dbReference type="PIRSF" id="PIRSF000292">
    <property type="entry name" value="Ubi_od_II"/>
    <property type="match status" value="1"/>
</dbReference>
<dbReference type="PRINTS" id="PR01166">
    <property type="entry name" value="CYCOXIDASEII"/>
</dbReference>
<dbReference type="SUPFAM" id="SSF49503">
    <property type="entry name" value="Cupredoxins"/>
    <property type="match status" value="1"/>
</dbReference>
<dbReference type="SUPFAM" id="SSF81464">
    <property type="entry name" value="Cytochrome c oxidase subunit II-like, transmembrane region"/>
    <property type="match status" value="1"/>
</dbReference>
<dbReference type="PROSITE" id="PS50857">
    <property type="entry name" value="COX2_CUA"/>
    <property type="match status" value="1"/>
</dbReference>
<dbReference type="PROSITE" id="PS50999">
    <property type="entry name" value="COX2_TM"/>
    <property type="match status" value="1"/>
</dbReference>
<name>QOX2_BACC1</name>